<organism>
    <name type="scientific">Streptomyces fradiae</name>
    <name type="common">Streptomyces roseoflavus</name>
    <dbReference type="NCBI Taxonomy" id="1906"/>
    <lineage>
        <taxon>Bacteria</taxon>
        <taxon>Bacillati</taxon>
        <taxon>Actinomycetota</taxon>
        <taxon>Actinomycetes</taxon>
        <taxon>Kitasatosporales</taxon>
        <taxon>Streptomycetaceae</taxon>
        <taxon>Streptomyces</taxon>
    </lineage>
</organism>
<dbReference type="EC" id="5.1.3.-" evidence="2"/>
<dbReference type="EMBL" id="AB211959">
    <property type="protein sequence ID" value="BAD95825.1"/>
    <property type="molecule type" value="Genomic_DNA"/>
</dbReference>
<dbReference type="EMBL" id="AJ629247">
    <property type="protein sequence ID" value="CAF33317.1"/>
    <property type="molecule type" value="Genomic_DNA"/>
</dbReference>
<dbReference type="EMBL" id="AJ786317">
    <property type="protein sequence ID" value="CAH05096.1"/>
    <property type="molecule type" value="Genomic_DNA"/>
</dbReference>
<dbReference type="EMBL" id="AJ843080">
    <property type="protein sequence ID" value="CAH58695.1"/>
    <property type="molecule type" value="Genomic_DNA"/>
</dbReference>
<dbReference type="RefSeq" id="WP_031132490.1">
    <property type="nucleotide sequence ID" value="NZ_MUNC01000172.1"/>
</dbReference>
<dbReference type="SMR" id="Q53U14"/>
<dbReference type="KEGG" id="ag:BAD95825"/>
<dbReference type="UniPathway" id="UPA00969"/>
<dbReference type="GO" id="GO:0051539">
    <property type="term" value="F:4 iron, 4 sulfur cluster binding"/>
    <property type="evidence" value="ECO:0007669"/>
    <property type="project" value="UniProtKB-KW"/>
</dbReference>
<dbReference type="GO" id="GO:0016853">
    <property type="term" value="F:isomerase activity"/>
    <property type="evidence" value="ECO:0007669"/>
    <property type="project" value="UniProtKB-KW"/>
</dbReference>
<dbReference type="GO" id="GO:0046872">
    <property type="term" value="F:metal ion binding"/>
    <property type="evidence" value="ECO:0007669"/>
    <property type="project" value="UniProtKB-KW"/>
</dbReference>
<dbReference type="GO" id="GO:0017000">
    <property type="term" value="P:antibiotic biosynthetic process"/>
    <property type="evidence" value="ECO:0007669"/>
    <property type="project" value="UniProtKB-KW"/>
</dbReference>
<dbReference type="CDD" id="cd01335">
    <property type="entry name" value="Radical_SAM"/>
    <property type="match status" value="1"/>
</dbReference>
<dbReference type="Gene3D" id="3.20.20.70">
    <property type="entry name" value="Aldolase class I"/>
    <property type="match status" value="1"/>
</dbReference>
<dbReference type="InterPro" id="IPR013785">
    <property type="entry name" value="Aldolase_TIM"/>
</dbReference>
<dbReference type="InterPro" id="IPR000385">
    <property type="entry name" value="MoaA_NifB_PqqE_Fe-S-bd_CS"/>
</dbReference>
<dbReference type="InterPro" id="IPR007197">
    <property type="entry name" value="rSAM"/>
</dbReference>
<dbReference type="Pfam" id="PF04055">
    <property type="entry name" value="Radical_SAM"/>
    <property type="match status" value="1"/>
</dbReference>
<dbReference type="SFLD" id="SFLDF00546">
    <property type="entry name" value="neomycin_C-like_epimerase"/>
    <property type="match status" value="1"/>
</dbReference>
<dbReference type="SFLD" id="SFLDS00029">
    <property type="entry name" value="Radical_SAM"/>
    <property type="match status" value="1"/>
</dbReference>
<dbReference type="SUPFAM" id="SSF102114">
    <property type="entry name" value="Radical SAM enzymes"/>
    <property type="match status" value="1"/>
</dbReference>
<dbReference type="PROSITE" id="PS01305">
    <property type="entry name" value="MOAA_NIFB_PQQE"/>
    <property type="match status" value="1"/>
</dbReference>
<dbReference type="PROSITE" id="PS51918">
    <property type="entry name" value="RADICAL_SAM"/>
    <property type="match status" value="1"/>
</dbReference>
<protein>
    <recommendedName>
        <fullName evidence="5">Neomycin C epimerase</fullName>
        <ecNumber evidence="2">5.1.3.-</ecNumber>
    </recommendedName>
    <alternativeName>
        <fullName evidence="3">Radical S-adenosyl-L-methionine epimerase NeoN</fullName>
        <shortName evidence="3">Radical SAM epimerase NeoN</shortName>
    </alternativeName>
</protein>
<name>NEOEP_STRFR</name>
<sequence>MTTDIVWPPPVRQVRAYRNIVVDGACNIRCTYCEVKKTKVDQPATIRSLDRIFAEYEPDAVLFRVESDGEITLYPKIVDHLQKRAAEGYRVEVLSNGTKLPRALEGRPDLLWVFSVDGHTEAMNAKRGLKQPQIDRILDAAVELGAELQTVYWGQPVEEVNAYIDLLESRGYRGLLHFMPLLAFKGRPLTVNLRYQDLHPADFLAPPEYFRRWNHIFETGRRDAVCDQITNGYNYQVSGDEIRMVKCDCYSVPKHLVHGFGPIREFDDWPCGTCIANQEFNNSRERMRVPQGRIPLPLV</sequence>
<feature type="chain" id="PRO_0000431421" description="Neomycin C epimerase">
    <location>
        <begin position="1"/>
        <end position="299"/>
    </location>
</feature>
<feature type="domain" description="Radical SAM core" evidence="1">
    <location>
        <begin position="10"/>
        <end position="222"/>
    </location>
</feature>
<feature type="active site" description="Proton donor" evidence="3">
    <location>
        <position position="249"/>
    </location>
</feature>
<feature type="binding site" evidence="3 4">
    <location>
        <position position="26"/>
    </location>
    <ligand>
        <name>[4Fe-4S] cluster</name>
        <dbReference type="ChEBI" id="CHEBI:49883"/>
        <label>1</label>
        <note>4Fe-4S-S-AdoMet</note>
    </ligand>
</feature>
<feature type="binding site" evidence="3 4">
    <location>
        <position position="30"/>
    </location>
    <ligand>
        <name>[4Fe-4S] cluster</name>
        <dbReference type="ChEBI" id="CHEBI:49883"/>
        <label>1</label>
        <note>4Fe-4S-S-AdoMet</note>
    </ligand>
</feature>
<feature type="binding site" evidence="3 4">
    <location>
        <position position="33"/>
    </location>
    <ligand>
        <name>[4Fe-4S] cluster</name>
        <dbReference type="ChEBI" id="CHEBI:49883"/>
        <label>1</label>
        <note>4Fe-4S-S-AdoMet</note>
    </ligand>
</feature>
<feature type="binding site" evidence="3">
    <location>
        <position position="226"/>
    </location>
    <ligand>
        <name>[4Fe-4S] cluster</name>
        <dbReference type="ChEBI" id="CHEBI:49883"/>
        <label>2</label>
    </ligand>
</feature>
<feature type="binding site" evidence="3">
    <location>
        <position position="247"/>
    </location>
    <ligand>
        <name>[4Fe-4S] cluster</name>
        <dbReference type="ChEBI" id="CHEBI:49883"/>
        <label>2</label>
    </ligand>
</feature>
<feature type="binding site" evidence="3">
    <location>
        <position position="271"/>
    </location>
    <ligand>
        <name>[4Fe-4S] cluster</name>
        <dbReference type="ChEBI" id="CHEBI:49883"/>
        <label>2</label>
    </ligand>
</feature>
<feature type="binding site" evidence="3">
    <location>
        <position position="274"/>
    </location>
    <ligand>
        <name>[4Fe-4S] cluster</name>
        <dbReference type="ChEBI" id="CHEBI:49883"/>
        <label>2</label>
    </ligand>
</feature>
<feature type="mutagenesis site" description="Loss of enzymatic activity." evidence="2">
    <original>CNIRCTYC</original>
    <variation>ANIRATYA</variation>
    <location>
        <begin position="26"/>
        <end position="33"/>
    </location>
</feature>
<feature type="mutagenesis site" description="Reacts with neomycin C, but generates a new enzymatic product and not neomycin B." evidence="2">
    <original>C</original>
    <variation>A</variation>
    <location>
        <position position="249"/>
    </location>
</feature>
<evidence type="ECO:0000255" key="1">
    <source>
        <dbReference type="PROSITE-ProRule" id="PRU01266"/>
    </source>
</evidence>
<evidence type="ECO:0000269" key="2">
    <source>
    </source>
</evidence>
<evidence type="ECO:0000303" key="3">
    <source>
    </source>
</evidence>
<evidence type="ECO:0000305" key="4"/>
<evidence type="ECO:0000305" key="5">
    <source>
    </source>
</evidence>
<evidence type="ECO:0000312" key="6">
    <source>
        <dbReference type="EMBL" id="BAD95825.1"/>
    </source>
</evidence>
<evidence type="ECO:0000312" key="7">
    <source>
        <dbReference type="EMBL" id="CAF33317.1"/>
    </source>
</evidence>
<gene>
    <name evidence="3 7" type="primary">neoN</name>
    <name evidence="6" type="synonym">neoH</name>
</gene>
<proteinExistence type="evidence at protein level"/>
<comment type="function">
    <text evidence="2">Catalyzes the last step of neomycin B biosynthesis, i.e. the irreversible epimerization at C-5''' of neomycin C to give neomycin B. To a lesser extent, is also able to convert neomycin Y2 to neomycin Y1.</text>
</comment>
<comment type="catalytic activity">
    <reaction evidence="2">
        <text>neomycin C + AH2 + S-adenosyl-L-methionine = neomycin B + 5'-deoxyadenosine + L-methionine + A + H(+)</text>
        <dbReference type="Rhea" id="RHEA:47692"/>
        <dbReference type="ChEBI" id="CHEBI:13193"/>
        <dbReference type="ChEBI" id="CHEBI:15378"/>
        <dbReference type="ChEBI" id="CHEBI:17319"/>
        <dbReference type="ChEBI" id="CHEBI:17499"/>
        <dbReference type="ChEBI" id="CHEBI:57844"/>
        <dbReference type="ChEBI" id="CHEBI:59789"/>
        <dbReference type="ChEBI" id="CHEBI:65077"/>
        <dbReference type="ChEBI" id="CHEBI:87835"/>
    </reaction>
</comment>
<comment type="cofactor">
    <cofactor evidence="2">
        <name>[4Fe-4S] cluster</name>
        <dbReference type="ChEBI" id="CHEBI:49883"/>
    </cofactor>
    <text evidence="2">Binds 2 [4Fe-4S] clusters. One cluster is coordinated with 3 cysteines and an exchangeable S-adenosyl-L-methionine. The second cluster is proposed to be involved in the electron-transfer mechanism for the catalytic cycle.</text>
</comment>
<comment type="pathway">
    <text evidence="3">Antibiotic biosynthesis; neomycin biosynthesis.</text>
</comment>
<comment type="similarity">
    <text evidence="4">Belongs to the radical SAM superfamily.</text>
</comment>
<reference key="1">
    <citation type="submission" date="2004-02" db="EMBL/GenBank/DDBJ databases">
        <title>Analysis and comparison of biosynthetic gene clusters for the 2-deoxy-inosamine containing aminoglycoside antibiotics ribostamycin, neomycin, lividomycin, paromomycin and butirosin.</title>
        <authorList>
            <person name="Aboshanab K.M."/>
            <person name="Schmidt-Beissner H."/>
            <person name="Wehmeier U.F."/>
            <person name="Piepersberg W."/>
            <person name="Welzel K."/>
            <person name="Vente A."/>
        </authorList>
    </citation>
    <scope>NUCLEOTIDE SEQUENCE [GENOMIC DNA]</scope>
    <source>
        <strain>ATCC 10745 / CBS 498.68 / DSM 40063 / JCM 4133 / NBRC 12773 / NCIMB 8233 / NRRL B-1195 / VKM Ac-150</strain>
    </source>
</reference>
<reference key="2">
    <citation type="submission" date="2004-07" db="EMBL/GenBank/DDBJ databases">
        <title>Cloning and characterization of a neomycin biosynthetic gene cluster from Streptomyces fradiae, ATCC 10745.</title>
        <authorList>
            <person name="Subba B."/>
            <person name="Kharel M.K."/>
            <person name="Sthapit B."/>
            <person name="Liou K."/>
            <person name="Lee H.C."/>
            <person name="Woo J.S."/>
            <person name="Sohng J.K."/>
        </authorList>
    </citation>
    <scope>NUCLEOTIDE SEQUENCE [GENOMIC DNA]</scope>
    <source>
        <strain>ATCC 10745 / CBS 498.68 / DSM 40063 / JCM 4133 / NBRC 12773 / NCIMB 8233 / NRRL B-1195 / VKM Ac-150</strain>
    </source>
</reference>
<reference key="3">
    <citation type="journal article" date="2005" name="J. Antibiot.">
        <title>Biosynthesis of 2-deoxystreptamine by three crucial enzymes in Streptomyces fradiae NBRC 12773.</title>
        <authorList>
            <person name="Kudo F."/>
            <person name="Yamamoto Y."/>
            <person name="Yokoyama K."/>
            <person name="Eguchi T."/>
            <person name="Kakinuma K."/>
        </authorList>
    </citation>
    <scope>NUCLEOTIDE SEQUENCE [GENOMIC DNA]</scope>
    <source>
        <strain>ATCC 10745 / CBS 498.68 / DSM 40063 / JCM 4133 / NBRC 12773 / NCIMB 8233 / NRRL B-1195 / VKM Ac-150</strain>
    </source>
</reference>
<reference key="4">
    <citation type="journal article" date="2005" name="Org. Biomol. Chem.">
        <title>The neomycin biosynthetic gene cluster of Streptomyces fradiae NCIMB 8233: characterisation of an aminotransferase involved in the formation of 2-deoxystreptamine.</title>
        <authorList>
            <person name="Huang F."/>
            <person name="Haydock S.F."/>
            <person name="Mironenko T."/>
            <person name="Spiteller D."/>
            <person name="Li Y."/>
            <person name="Spencer J.B."/>
        </authorList>
    </citation>
    <scope>NUCLEOTIDE SEQUENCE [GENOMIC DNA]</scope>
    <source>
        <strain>ATCC 10745 / CBS 498.68 / DSM 40063 / JCM 4133 / NBRC 12773 / NCIMB 8233 / NRRL B-1195 / VKM Ac-150</strain>
    </source>
</reference>
<reference key="5">
    <citation type="journal article" date="2014" name="J. Am. Chem. Soc.">
        <title>Characterization of a radical S-adenosyl-L-methionine epimerase, NeoN, in the last step of neomycin B biosynthesis.</title>
        <authorList>
            <person name="Kudo F."/>
            <person name="Hoshi S."/>
            <person name="Kawashima T."/>
            <person name="Kamachi T."/>
            <person name="Eguchi T."/>
        </authorList>
    </citation>
    <scope>FUNCTION</scope>
    <scope>CATALYTIC ACTIVITY</scope>
    <scope>COFACTOR</scope>
    <scope>REACTION MECHANISM</scope>
    <scope>ACTIVE SITE</scope>
    <scope>MUTAGENESIS OF 26-CYS--CYS-33 AND CYS-249</scope>
    <source>
        <strain>ATCC 10745 / CBS 498.68 / DSM 40063 / JCM 4133 / NBRC 12773 / NCIMB 8233 / NRRL B-1195 / VKM Ac-150</strain>
    </source>
</reference>
<accession>Q53U14</accession>
<keyword id="KW-0004">4Fe-4S</keyword>
<keyword id="KW-0045">Antibiotic biosynthesis</keyword>
<keyword id="KW-0408">Iron</keyword>
<keyword id="KW-0411">Iron-sulfur</keyword>
<keyword id="KW-0413">Isomerase</keyword>
<keyword id="KW-0479">Metal-binding</keyword>
<keyword id="KW-0949">S-adenosyl-L-methionine</keyword>